<reference key="1">
    <citation type="journal article" date="2000" name="DNA Res.">
        <title>Structural analysis of Arabidopsis thaliana chromosome 3. I. Sequence features of the regions of 4,504,864 bp covered by sixty P1 and TAC clones.</title>
        <authorList>
            <person name="Sato S."/>
            <person name="Nakamura Y."/>
            <person name="Kaneko T."/>
            <person name="Katoh T."/>
            <person name="Asamizu E."/>
            <person name="Tabata S."/>
        </authorList>
    </citation>
    <scope>NUCLEOTIDE SEQUENCE [LARGE SCALE GENOMIC DNA]</scope>
    <source>
        <strain>cv. Columbia</strain>
    </source>
</reference>
<reference key="2">
    <citation type="journal article" date="2000" name="DNA Res.">
        <title>Structural analysis of Arabidopsis thaliana chromosome 3. II. Sequence features of the 4,251,695 bp regions covered by 90 P1, TAC and BAC clones.</title>
        <authorList>
            <person name="Kaneko T."/>
            <person name="Katoh T."/>
            <person name="Sato S."/>
            <person name="Nakamura Y."/>
            <person name="Asamizu E."/>
            <person name="Tabata S."/>
        </authorList>
    </citation>
    <scope>NUCLEOTIDE SEQUENCE [LARGE SCALE GENOMIC DNA]</scope>
    <source>
        <strain>cv. Columbia</strain>
    </source>
</reference>
<reference key="3">
    <citation type="journal article" date="2017" name="Plant J.">
        <title>Araport11: a complete reannotation of the Arabidopsis thaliana reference genome.</title>
        <authorList>
            <person name="Cheng C.Y."/>
            <person name="Krishnakumar V."/>
            <person name="Chan A.P."/>
            <person name="Thibaud-Nissen F."/>
            <person name="Schobel S."/>
            <person name="Town C.D."/>
        </authorList>
    </citation>
    <scope>GENOME REANNOTATION</scope>
    <source>
        <strain>cv. Columbia</strain>
    </source>
</reference>
<reference key="4">
    <citation type="journal article" date="2003" name="Science">
        <title>Empirical analysis of transcriptional activity in the Arabidopsis genome.</title>
        <authorList>
            <person name="Yamada K."/>
            <person name="Lim J."/>
            <person name="Dale J.M."/>
            <person name="Chen H."/>
            <person name="Shinn P."/>
            <person name="Palm C.J."/>
            <person name="Southwick A.M."/>
            <person name="Wu H.C."/>
            <person name="Kim C.J."/>
            <person name="Nguyen M."/>
            <person name="Pham P.K."/>
            <person name="Cheuk R.F."/>
            <person name="Karlin-Newmann G."/>
            <person name="Liu S.X."/>
            <person name="Lam B."/>
            <person name="Sakano H."/>
            <person name="Wu T."/>
            <person name="Yu G."/>
            <person name="Miranda M."/>
            <person name="Quach H.L."/>
            <person name="Tripp M."/>
            <person name="Chang C.H."/>
            <person name="Lee J.M."/>
            <person name="Toriumi M.J."/>
            <person name="Chan M.M."/>
            <person name="Tang C.C."/>
            <person name="Onodera C.S."/>
            <person name="Deng J.M."/>
            <person name="Akiyama K."/>
            <person name="Ansari Y."/>
            <person name="Arakawa T."/>
            <person name="Banh J."/>
            <person name="Banno F."/>
            <person name="Bowser L."/>
            <person name="Brooks S.Y."/>
            <person name="Carninci P."/>
            <person name="Chao Q."/>
            <person name="Choy N."/>
            <person name="Enju A."/>
            <person name="Goldsmith A.D."/>
            <person name="Gurjal M."/>
            <person name="Hansen N.F."/>
            <person name="Hayashizaki Y."/>
            <person name="Johnson-Hopson C."/>
            <person name="Hsuan V.W."/>
            <person name="Iida K."/>
            <person name="Karnes M."/>
            <person name="Khan S."/>
            <person name="Koesema E."/>
            <person name="Ishida J."/>
            <person name="Jiang P.X."/>
            <person name="Jones T."/>
            <person name="Kawai J."/>
            <person name="Kamiya A."/>
            <person name="Meyers C."/>
            <person name="Nakajima M."/>
            <person name="Narusaka M."/>
            <person name="Seki M."/>
            <person name="Sakurai T."/>
            <person name="Satou M."/>
            <person name="Tamse R."/>
            <person name="Vaysberg M."/>
            <person name="Wallender E.K."/>
            <person name="Wong C."/>
            <person name="Yamamura Y."/>
            <person name="Yuan S."/>
            <person name="Shinozaki K."/>
            <person name="Davis R.W."/>
            <person name="Theologis A."/>
            <person name="Ecker J.R."/>
        </authorList>
    </citation>
    <scope>NUCLEOTIDE SEQUENCE [LARGE SCALE MRNA]</scope>
    <source>
        <strain>cv. Columbia</strain>
    </source>
</reference>
<reference key="5">
    <citation type="submission" date="2002-03" db="EMBL/GenBank/DDBJ databases">
        <title>Full-length cDNA from Arabidopsis thaliana.</title>
        <authorList>
            <person name="Brover V.V."/>
            <person name="Troukhan M.E."/>
            <person name="Alexandrov N.A."/>
            <person name="Lu Y.-P."/>
            <person name="Flavell R.B."/>
            <person name="Feldmann K.A."/>
        </authorList>
    </citation>
    <scope>NUCLEOTIDE SEQUENCE [LARGE SCALE MRNA] OF 133-283</scope>
</reference>
<reference key="6">
    <citation type="journal article" date="2005" name="Plant Cell">
        <title>Identification and functional characterization of Arabidopsis PEROXIN4 and the interacting protein PEROXIN22.</title>
        <authorList>
            <person name="Zolman B.K."/>
            <person name="Monroe-Augustus M."/>
            <person name="Silva I.D."/>
            <person name="Bartel B."/>
        </authorList>
    </citation>
    <scope>FUNCTION</scope>
    <scope>INTERACTION WITH PEX4</scope>
</reference>
<reference key="7">
    <citation type="journal article" date="2007" name="Plant Cell Physiol.">
        <title>Functional classification of Arabidopsis peroxisome biogenesis factors proposed from analyses of knockdown mutants.</title>
        <authorList>
            <person name="Nito K."/>
            <person name="Kamigaki A."/>
            <person name="Kondo M."/>
            <person name="Hayashi M."/>
            <person name="Nishimura M."/>
        </authorList>
    </citation>
    <scope>IDENTIFICATION</scope>
</reference>
<reference key="8">
    <citation type="journal article" date="2009" name="Proc. Natl. Acad. Sci. U.S.A.">
        <title>Peroxisome-associated matrix protein degradation in Arabidopsis.</title>
        <authorList>
            <person name="Lingard M.J."/>
            <person name="Monroe-Augustus M."/>
            <person name="Bartel B."/>
        </authorList>
    </citation>
    <scope>FUNCTION</scope>
</reference>
<reference key="9">
    <citation type="journal article" date="2012" name="Mol. Cell. Proteomics">
        <title>Comparative large-scale characterisation of plant vs. mammal proteins reveals similar and idiosyncratic N-alpha acetylation features.</title>
        <authorList>
            <person name="Bienvenut W.V."/>
            <person name="Sumpton D."/>
            <person name="Martinez A."/>
            <person name="Lilla S."/>
            <person name="Espagne C."/>
            <person name="Meinnel T."/>
            <person name="Giglione C."/>
        </authorList>
    </citation>
    <scope>ACETYLATION [LARGE SCALE ANALYSIS] AT ALA-2</scope>
    <scope>CLEAVAGE OF INITIATOR METHIONINE [LARGE SCALE ANALYSIS]</scope>
    <scope>IDENTIFICATION BY MASS SPECTROMETRY [LARGE SCALE ANALYSIS]</scope>
</reference>
<feature type="initiator methionine" description="Removed" evidence="7">
    <location>
        <position position="1"/>
    </location>
</feature>
<feature type="chain" id="PRO_0000404534" description="Peroxisome biogenesis protein 22">
    <location>
        <begin position="2"/>
        <end position="283"/>
    </location>
</feature>
<feature type="transmembrane region" description="Helical" evidence="2">
    <location>
        <begin position="45"/>
        <end position="62"/>
    </location>
</feature>
<feature type="region of interest" description="Disordered" evidence="3">
    <location>
        <begin position="66"/>
        <end position="107"/>
    </location>
</feature>
<feature type="compositionally biased region" description="Low complexity" evidence="3">
    <location>
        <begin position="81"/>
        <end position="100"/>
    </location>
</feature>
<feature type="modified residue" description="N-acetylalanine" evidence="7">
    <location>
        <position position="2"/>
    </location>
</feature>
<feature type="sequence conflict" description="In Ref. 5; AAM67361." evidence="6" ref="5">
    <original>R</original>
    <variation>K</variation>
    <location>
        <position position="186"/>
    </location>
</feature>
<feature type="helix" evidence="8">
    <location>
        <begin position="127"/>
        <end position="135"/>
    </location>
</feature>
<feature type="strand" evidence="8">
    <location>
        <begin position="140"/>
        <end position="144"/>
    </location>
</feature>
<feature type="turn" evidence="8">
    <location>
        <begin position="147"/>
        <end position="149"/>
    </location>
</feature>
<feature type="helix" evidence="8">
    <location>
        <begin position="155"/>
        <end position="158"/>
    </location>
</feature>
<feature type="helix" evidence="8">
    <location>
        <begin position="166"/>
        <end position="168"/>
    </location>
</feature>
<feature type="helix" evidence="8">
    <location>
        <begin position="169"/>
        <end position="178"/>
    </location>
</feature>
<feature type="strand" evidence="8">
    <location>
        <begin position="179"/>
        <end position="186"/>
    </location>
</feature>
<feature type="helix" evidence="8">
    <location>
        <begin position="190"/>
        <end position="202"/>
    </location>
</feature>
<feature type="helix" evidence="8">
    <location>
        <begin position="213"/>
        <end position="215"/>
    </location>
</feature>
<feature type="strand" evidence="8">
    <location>
        <begin position="216"/>
        <end position="221"/>
    </location>
</feature>
<feature type="helix" evidence="8">
    <location>
        <begin position="222"/>
        <end position="232"/>
    </location>
</feature>
<feature type="strand" evidence="8">
    <location>
        <begin position="235"/>
        <end position="240"/>
    </location>
</feature>
<feature type="helix" evidence="8">
    <location>
        <begin position="242"/>
        <end position="248"/>
    </location>
</feature>
<feature type="turn" evidence="8">
    <location>
        <begin position="249"/>
        <end position="251"/>
    </location>
</feature>
<feature type="strand" evidence="8">
    <location>
        <begin position="253"/>
        <end position="258"/>
    </location>
</feature>
<feature type="strand" evidence="8">
    <location>
        <begin position="270"/>
        <end position="274"/>
    </location>
</feature>
<feature type="helix" evidence="8">
    <location>
        <begin position="276"/>
        <end position="280"/>
    </location>
</feature>
<comment type="function">
    <text evidence="4 5">May be tethered PEX4 to the peroxisome membrane and may be involved in a late step of the matrix protein import. Does not play a role in the biogenesis of the peroxisomal membrane.</text>
</comment>
<comment type="subunit">
    <text evidence="4">Interacts with PEX4.</text>
</comment>
<comment type="subcellular location">
    <subcellularLocation>
        <location evidence="1">Peroxisome membrane</location>
        <topology evidence="1">Single-pass membrane protein</topology>
    </subcellularLocation>
</comment>
<comment type="similarity">
    <text evidence="6">Belongs to the peroxin-22 family.</text>
</comment>
<gene>
    <name type="primary">PEX22</name>
    <name type="ordered locus">At3g21865</name>
    <name type="ORF">MSD21.24</name>
</gene>
<evidence type="ECO:0000250" key="1"/>
<evidence type="ECO:0000255" key="2"/>
<evidence type="ECO:0000256" key="3">
    <source>
        <dbReference type="SAM" id="MobiDB-lite"/>
    </source>
</evidence>
<evidence type="ECO:0000269" key="4">
    <source>
    </source>
</evidence>
<evidence type="ECO:0000269" key="5">
    <source>
    </source>
</evidence>
<evidence type="ECO:0000305" key="6"/>
<evidence type="ECO:0007744" key="7">
    <source>
    </source>
</evidence>
<evidence type="ECO:0007829" key="8">
    <source>
        <dbReference type="PDB" id="6XOD"/>
    </source>
</evidence>
<accession>Q9LSX7</accession>
<accession>Q8LCS2</accession>
<protein>
    <recommendedName>
        <fullName>Peroxisome biogenesis protein 22</fullName>
    </recommendedName>
    <alternativeName>
        <fullName>Peroxin-22</fullName>
        <shortName>AtPEX22</shortName>
    </alternativeName>
</protein>
<proteinExistence type="evidence at protein level"/>
<name>PEX22_ARATH</name>
<keyword id="KW-0002">3D-structure</keyword>
<keyword id="KW-0007">Acetylation</keyword>
<keyword id="KW-0472">Membrane</keyword>
<keyword id="KW-0576">Peroxisome</keyword>
<keyword id="KW-0962">Peroxisome biogenesis</keyword>
<keyword id="KW-0653">Protein transport</keyword>
<keyword id="KW-1185">Reference proteome</keyword>
<keyword id="KW-0812">Transmembrane</keyword>
<keyword id="KW-1133">Transmembrane helix</keyword>
<keyword id="KW-0813">Transport</keyword>
<dbReference type="EMBL" id="AB025634">
    <property type="protein sequence ID" value="BAB02849.1"/>
    <property type="molecule type" value="Genomic_DNA"/>
</dbReference>
<dbReference type="EMBL" id="AP000739">
    <property type="protein sequence ID" value="BAB02849.1"/>
    <property type="status" value="JOINED"/>
    <property type="molecule type" value="Genomic_DNA"/>
</dbReference>
<dbReference type="EMBL" id="CP002686">
    <property type="protein sequence ID" value="AEE76560.1"/>
    <property type="molecule type" value="Genomic_DNA"/>
</dbReference>
<dbReference type="EMBL" id="AY063961">
    <property type="protein sequence ID" value="AAL36317.1"/>
    <property type="molecule type" value="mRNA"/>
</dbReference>
<dbReference type="EMBL" id="AY096402">
    <property type="protein sequence ID" value="AAM20042.1"/>
    <property type="molecule type" value="mRNA"/>
</dbReference>
<dbReference type="EMBL" id="AY086434">
    <property type="protein sequence ID" value="AAM67361.1"/>
    <property type="molecule type" value="mRNA"/>
</dbReference>
<dbReference type="RefSeq" id="NP_566696.2">
    <property type="nucleotide sequence ID" value="NM_113082.4"/>
</dbReference>
<dbReference type="PDB" id="6XOD">
    <property type="method" value="X-ray"/>
    <property type="resolution" value="2.01 A"/>
    <property type="chains" value="B=111-283"/>
</dbReference>
<dbReference type="PDBsum" id="6XOD"/>
<dbReference type="SMR" id="Q9LSX7"/>
<dbReference type="BioGRID" id="7073">
    <property type="interactions" value="1"/>
</dbReference>
<dbReference type="FunCoup" id="Q9LSX7">
    <property type="interactions" value="2244"/>
</dbReference>
<dbReference type="IntAct" id="Q9LSX7">
    <property type="interactions" value="1"/>
</dbReference>
<dbReference type="STRING" id="3702.Q9LSX7"/>
<dbReference type="iPTMnet" id="Q9LSX7"/>
<dbReference type="PaxDb" id="3702-AT3G21865.1"/>
<dbReference type="ProteomicsDB" id="236312"/>
<dbReference type="DNASU" id="821741"/>
<dbReference type="EnsemblPlants" id="AT3G21865.1">
    <property type="protein sequence ID" value="AT3G21865.1"/>
    <property type="gene ID" value="AT3G21865"/>
</dbReference>
<dbReference type="GeneID" id="821741"/>
<dbReference type="Gramene" id="AT3G21865.1">
    <property type="protein sequence ID" value="AT3G21865.1"/>
    <property type="gene ID" value="AT3G21865"/>
</dbReference>
<dbReference type="KEGG" id="ath:AT3G21865"/>
<dbReference type="Araport" id="AT3G21865"/>
<dbReference type="TAIR" id="AT3G21865">
    <property type="gene designation" value="PEX22"/>
</dbReference>
<dbReference type="eggNOG" id="ENOG502QQ8Q">
    <property type="taxonomic scope" value="Eukaryota"/>
</dbReference>
<dbReference type="HOGENOM" id="CLU_069239_0_0_1"/>
<dbReference type="InParanoid" id="Q9LSX7"/>
<dbReference type="OMA" id="TAPNVFC"/>
<dbReference type="OrthoDB" id="77656at2759"/>
<dbReference type="PhylomeDB" id="Q9LSX7"/>
<dbReference type="PRO" id="PR:Q9LSX7"/>
<dbReference type="Proteomes" id="UP000006548">
    <property type="component" value="Chromosome 3"/>
</dbReference>
<dbReference type="ExpressionAtlas" id="Q9LSX7">
    <property type="expression patterns" value="baseline and differential"/>
</dbReference>
<dbReference type="GO" id="GO:0005778">
    <property type="term" value="C:peroxisomal membrane"/>
    <property type="evidence" value="ECO:0007669"/>
    <property type="project" value="UniProtKB-SubCell"/>
</dbReference>
<dbReference type="GO" id="GO:0007031">
    <property type="term" value="P:peroxisome organization"/>
    <property type="evidence" value="ECO:0000315"/>
    <property type="project" value="TAIR"/>
</dbReference>
<dbReference type="GO" id="GO:0015031">
    <property type="term" value="P:protein transport"/>
    <property type="evidence" value="ECO:0007669"/>
    <property type="project" value="UniProtKB-KW"/>
</dbReference>
<dbReference type="InterPro" id="IPR037485">
    <property type="entry name" value="PEX22"/>
</dbReference>
<dbReference type="PANTHER" id="PTHR34126">
    <property type="entry name" value="PEROXISOME BIOGENESIS PROTEIN 22"/>
    <property type="match status" value="1"/>
</dbReference>
<dbReference type="PANTHER" id="PTHR34126:SF1">
    <property type="entry name" value="PEROXISOME BIOGENESIS PROTEIN 22"/>
    <property type="match status" value="1"/>
</dbReference>
<dbReference type="Pfam" id="PF22978">
    <property type="entry name" value="HAD_Pex22"/>
    <property type="match status" value="1"/>
</dbReference>
<organism>
    <name type="scientific">Arabidopsis thaliana</name>
    <name type="common">Mouse-ear cress</name>
    <dbReference type="NCBI Taxonomy" id="3702"/>
    <lineage>
        <taxon>Eukaryota</taxon>
        <taxon>Viridiplantae</taxon>
        <taxon>Streptophyta</taxon>
        <taxon>Embryophyta</taxon>
        <taxon>Tracheophyta</taxon>
        <taxon>Spermatophyta</taxon>
        <taxon>Magnoliopsida</taxon>
        <taxon>eudicotyledons</taxon>
        <taxon>Gunneridae</taxon>
        <taxon>Pentapetalae</taxon>
        <taxon>rosids</taxon>
        <taxon>malvids</taxon>
        <taxon>Brassicales</taxon>
        <taxon>Brassicaceae</taxon>
        <taxon>Camelineae</taxon>
        <taxon>Arabidopsis</taxon>
    </lineage>
</organism>
<sequence>MAESSSPSPTEEIVRLIKRLSAYVAFKMSSLFSTTSIRNLDSRSIGAIAGLAIAVIFTWRAIRTPGEQRQRRQPKRRIHNAETSSAAAAASQSNLASSVAPEVSSPREDNAVQDVVDQFFQPVKPTLGQIVRQKLSEGRKVTCRLLGVILEETSPEELQKQATVRSSVLEVLLEITKYSDLYLMERVLDDESEAKVLQALENAGVFTSGGLVKDKVLFCSTEIGRTSFVRQLEPDWHIDTNPEISTQLARFIKYQLHVATVKPERTAPNVFTSQSIEQFFGSV</sequence>